<sequence>MDSDTSPNPFASSPPSSPSPRPSLPPPVPRKPSSLVSAASGSPPPTHRASFPDPARHPKMGATVPGPKPKTGYCCSIDKDISAGEQVHIVDALKTTEGGTASYITYVIRLGTHTVRRRYSAFLSLHQSLTGLYPVLIIPPIPSKQSLTDYAVKGQSKAREDATIIARRKRLLEDFLQRLIRHPILGGEHVLHRFLEEDVSWSEVLHSPPISLLSKNPLHAPSHNPTFQPTTPTSPSEAPATTSYIAHHLLPTPSPSHPLRQPDQRFMDSEAFTEKFQSHFSGTMEKVNRRVTKRWGERAHDMSELGGIWNGFSLVEQGKLGDAIEKVGRAVDAEYLATAALLQSWEKTTTEPLHIYSQFATLIRARLSFRHQKHVQYELVQEALETQRDKLEILENAEREARRLEEALERGGSVLASPQLEPEAARDERERAQRRARASQGFGLLSAVKHSLSGMIDMDPEATRRANIAKTRDNISQLEDSYQAAAQDLKYASMTLQADLDRFQRQKVADLREMAINLSQVHRDWCKQNLEAWKAAQAAVREIDPHPNRPAQTQTQVQSQQSHAGPSTLHAQTEDDVSKLGVDAMKNEIERVEIEIADKPLPKPSLAETGGDGVVPSPQPRQENDTEEREGHGPLGPL</sequence>
<proteinExistence type="inferred from homology"/>
<keyword id="KW-0072">Autophagy</keyword>
<keyword id="KW-0967">Endosome</keyword>
<keyword id="KW-0446">Lipid-binding</keyword>
<keyword id="KW-0472">Membrane</keyword>
<keyword id="KW-0653">Protein transport</keyword>
<keyword id="KW-0813">Transport</keyword>
<reference key="1">
    <citation type="journal article" date="2005" name="Science">
        <title>The genome of the basidiomycetous yeast and human pathogen Cryptococcus neoformans.</title>
        <authorList>
            <person name="Loftus B.J."/>
            <person name="Fung E."/>
            <person name="Roncaglia P."/>
            <person name="Rowley D."/>
            <person name="Amedeo P."/>
            <person name="Bruno D."/>
            <person name="Vamathevan J."/>
            <person name="Miranda M."/>
            <person name="Anderson I.J."/>
            <person name="Fraser J.A."/>
            <person name="Allen J.E."/>
            <person name="Bosdet I.E."/>
            <person name="Brent M.R."/>
            <person name="Chiu R."/>
            <person name="Doering T.L."/>
            <person name="Donlin M.J."/>
            <person name="D'Souza C.A."/>
            <person name="Fox D.S."/>
            <person name="Grinberg V."/>
            <person name="Fu J."/>
            <person name="Fukushima M."/>
            <person name="Haas B.J."/>
            <person name="Huang J.C."/>
            <person name="Janbon G."/>
            <person name="Jones S.J.M."/>
            <person name="Koo H.L."/>
            <person name="Krzywinski M.I."/>
            <person name="Kwon-Chung K.J."/>
            <person name="Lengeler K.B."/>
            <person name="Maiti R."/>
            <person name="Marra M.A."/>
            <person name="Marra R.E."/>
            <person name="Mathewson C.A."/>
            <person name="Mitchell T.G."/>
            <person name="Pertea M."/>
            <person name="Riggs F.R."/>
            <person name="Salzberg S.L."/>
            <person name="Schein J.E."/>
            <person name="Shvartsbeyn A."/>
            <person name="Shin H."/>
            <person name="Shumway M."/>
            <person name="Specht C.A."/>
            <person name="Suh B.B."/>
            <person name="Tenney A."/>
            <person name="Utterback T.R."/>
            <person name="Wickes B.L."/>
            <person name="Wortman J.R."/>
            <person name="Wye N.H."/>
            <person name="Kronstad J.W."/>
            <person name="Lodge J.K."/>
            <person name="Heitman J."/>
            <person name="Davis R.W."/>
            <person name="Fraser C.M."/>
            <person name="Hyman R.W."/>
        </authorList>
    </citation>
    <scope>NUCLEOTIDE SEQUENCE [LARGE SCALE GENOMIC DNA]</scope>
    <source>
        <strain>B-3501A</strain>
    </source>
</reference>
<organism>
    <name type="scientific">Cryptococcus neoformans var. neoformans serotype D (strain B-3501A)</name>
    <name type="common">Filobasidiella neoformans</name>
    <dbReference type="NCBI Taxonomy" id="283643"/>
    <lineage>
        <taxon>Eukaryota</taxon>
        <taxon>Fungi</taxon>
        <taxon>Dikarya</taxon>
        <taxon>Basidiomycota</taxon>
        <taxon>Agaricomycotina</taxon>
        <taxon>Tremellomycetes</taxon>
        <taxon>Tremellales</taxon>
        <taxon>Cryptococcaceae</taxon>
        <taxon>Cryptococcus</taxon>
        <taxon>Cryptococcus neoformans species complex</taxon>
    </lineage>
</organism>
<gene>
    <name type="primary">SNX41</name>
    <name type="ordered locus">CNBC3650</name>
</gene>
<name>SNX41_CRYNB</name>
<protein>
    <recommendedName>
        <fullName>Sorting nexin-41</fullName>
    </recommendedName>
</protein>
<comment type="function">
    <text evidence="1">May be required for cytoplasm to vacuole transport (Cvt) and pexophagy.</text>
</comment>
<comment type="subcellular location">
    <subcellularLocation>
        <location evidence="1">Endosome membrane</location>
        <topology evidence="1">Peripheral membrane protein</topology>
    </subcellularLocation>
    <subcellularLocation>
        <location evidence="1">Endomembrane system</location>
        <topology evidence="1">Peripheral membrane protein</topology>
    </subcellularLocation>
    <text evidence="1">Endosome and other perivacuolar punctate structures.</text>
</comment>
<comment type="domain">
    <text evidence="1">The PX domain binds phosphatidylinositol 3-phosphate which is necessary for peripheral membrane localization to the perivacuolar punctate structures.</text>
</comment>
<comment type="similarity">
    <text evidence="4">Belongs to the sorting nexin family.</text>
</comment>
<accession>P0CR65</accession>
<accession>Q55VX2</accession>
<accession>Q5KKB9</accession>
<dbReference type="EMBL" id="AAEY01000013">
    <property type="protein sequence ID" value="EAL22227.1"/>
    <property type="molecule type" value="Genomic_DNA"/>
</dbReference>
<dbReference type="RefSeq" id="XP_776874.1">
    <property type="nucleotide sequence ID" value="XM_771781.1"/>
</dbReference>
<dbReference type="SMR" id="P0CR65"/>
<dbReference type="GeneID" id="4935030"/>
<dbReference type="KEGG" id="cnb:CNBC3650"/>
<dbReference type="VEuPathDB" id="FungiDB:CNBC3650"/>
<dbReference type="HOGENOM" id="CLU_014456_1_1_1"/>
<dbReference type="OrthoDB" id="6864at5206"/>
<dbReference type="GO" id="GO:0005829">
    <property type="term" value="C:cytosol"/>
    <property type="evidence" value="ECO:0007669"/>
    <property type="project" value="GOC"/>
</dbReference>
<dbReference type="GO" id="GO:0010008">
    <property type="term" value="C:endosome membrane"/>
    <property type="evidence" value="ECO:0007669"/>
    <property type="project" value="UniProtKB-SubCell"/>
</dbReference>
<dbReference type="GO" id="GO:0035091">
    <property type="term" value="F:phosphatidylinositol binding"/>
    <property type="evidence" value="ECO:0007669"/>
    <property type="project" value="InterPro"/>
</dbReference>
<dbReference type="GO" id="GO:0006914">
    <property type="term" value="P:autophagy"/>
    <property type="evidence" value="ECO:0007669"/>
    <property type="project" value="UniProtKB-KW"/>
</dbReference>
<dbReference type="GO" id="GO:0015031">
    <property type="term" value="P:protein transport"/>
    <property type="evidence" value="ECO:0007669"/>
    <property type="project" value="UniProtKB-KW"/>
</dbReference>
<dbReference type="GO" id="GO:0042147">
    <property type="term" value="P:retrograde transport, endosome to Golgi"/>
    <property type="evidence" value="ECO:0007669"/>
    <property type="project" value="InterPro"/>
</dbReference>
<dbReference type="CDD" id="cd07629">
    <property type="entry name" value="BAR_Atg20p"/>
    <property type="match status" value="1"/>
</dbReference>
<dbReference type="CDD" id="cd06867">
    <property type="entry name" value="PX_SNX41_42"/>
    <property type="match status" value="1"/>
</dbReference>
<dbReference type="Gene3D" id="1.20.1270.60">
    <property type="entry name" value="Arfaptin homology (AH) domain/BAR domain"/>
    <property type="match status" value="1"/>
</dbReference>
<dbReference type="Gene3D" id="3.30.1520.10">
    <property type="entry name" value="Phox-like domain"/>
    <property type="match status" value="1"/>
</dbReference>
<dbReference type="InterPro" id="IPR027267">
    <property type="entry name" value="AH/BAR_dom_sf"/>
</dbReference>
<dbReference type="InterPro" id="IPR001683">
    <property type="entry name" value="PX_dom"/>
</dbReference>
<dbReference type="InterPro" id="IPR036871">
    <property type="entry name" value="PX_dom_sf"/>
</dbReference>
<dbReference type="InterPro" id="IPR044106">
    <property type="entry name" value="PX_Snx41/Atg20"/>
</dbReference>
<dbReference type="InterPro" id="IPR051079">
    <property type="entry name" value="Sorting_Nexin_Autophagy"/>
</dbReference>
<dbReference type="PANTHER" id="PTHR46979">
    <property type="entry name" value="SORTING NEXIN-41"/>
    <property type="match status" value="1"/>
</dbReference>
<dbReference type="PANTHER" id="PTHR46979:SF2">
    <property type="entry name" value="SORTING NEXIN-41"/>
    <property type="match status" value="1"/>
</dbReference>
<dbReference type="Pfam" id="PF00787">
    <property type="entry name" value="PX"/>
    <property type="match status" value="1"/>
</dbReference>
<dbReference type="SMART" id="SM00312">
    <property type="entry name" value="PX"/>
    <property type="match status" value="1"/>
</dbReference>
<dbReference type="SUPFAM" id="SSF64268">
    <property type="entry name" value="PX domain"/>
    <property type="match status" value="1"/>
</dbReference>
<dbReference type="PROSITE" id="PS50195">
    <property type="entry name" value="PX"/>
    <property type="match status" value="1"/>
</dbReference>
<feature type="chain" id="PRO_0000410294" description="Sorting nexin-41">
    <location>
        <begin position="1"/>
        <end position="638"/>
    </location>
</feature>
<feature type="domain" description="PX" evidence="2">
    <location>
        <begin position="84"/>
        <end position="201"/>
    </location>
</feature>
<feature type="region of interest" description="Disordered" evidence="3">
    <location>
        <begin position="1"/>
        <end position="69"/>
    </location>
</feature>
<feature type="region of interest" description="Disordered" evidence="3">
    <location>
        <begin position="215"/>
        <end position="239"/>
    </location>
</feature>
<feature type="region of interest" description="Disordered" evidence="3">
    <location>
        <begin position="408"/>
        <end position="432"/>
    </location>
</feature>
<feature type="region of interest" description="Disordered" evidence="3">
    <location>
        <begin position="545"/>
        <end position="638"/>
    </location>
</feature>
<feature type="compositionally biased region" description="Low complexity" evidence="3">
    <location>
        <begin position="1"/>
        <end position="14"/>
    </location>
</feature>
<feature type="compositionally biased region" description="Pro residues" evidence="3">
    <location>
        <begin position="15"/>
        <end position="30"/>
    </location>
</feature>
<feature type="compositionally biased region" description="Low complexity" evidence="3">
    <location>
        <begin position="225"/>
        <end position="239"/>
    </location>
</feature>
<feature type="compositionally biased region" description="Basic and acidic residues" evidence="3">
    <location>
        <begin position="423"/>
        <end position="432"/>
    </location>
</feature>
<feature type="compositionally biased region" description="Low complexity" evidence="3">
    <location>
        <begin position="552"/>
        <end position="562"/>
    </location>
</feature>
<feature type="compositionally biased region" description="Basic and acidic residues" evidence="3">
    <location>
        <begin position="585"/>
        <end position="601"/>
    </location>
</feature>
<feature type="binding site" evidence="1">
    <location>
        <position position="118"/>
    </location>
    <ligand>
        <name>a 1,2-diacyl-sn-glycero-3-phospho-(1D-myo-inositol-3-phosphate)</name>
        <dbReference type="ChEBI" id="CHEBI:58088"/>
    </ligand>
</feature>
<feature type="binding site" evidence="1">
    <location>
        <position position="120"/>
    </location>
    <ligand>
        <name>a 1,2-diacyl-sn-glycero-3-phospho-(1D-myo-inositol-3-phosphate)</name>
        <dbReference type="ChEBI" id="CHEBI:58088"/>
    </ligand>
</feature>
<feature type="binding site" evidence="1">
    <location>
        <position position="144"/>
    </location>
    <ligand>
        <name>a 1,2-diacyl-sn-glycero-3-phospho-(1D-myo-inositol-3-phosphate)</name>
        <dbReference type="ChEBI" id="CHEBI:58088"/>
    </ligand>
</feature>
<feature type="binding site" evidence="1">
    <location>
        <position position="168"/>
    </location>
    <ligand>
        <name>a 1,2-diacyl-sn-glycero-3-phospho-(1D-myo-inositol-3-phosphate)</name>
        <dbReference type="ChEBI" id="CHEBI:58088"/>
    </ligand>
</feature>
<evidence type="ECO:0000250" key="1"/>
<evidence type="ECO:0000255" key="2">
    <source>
        <dbReference type="PROSITE-ProRule" id="PRU00147"/>
    </source>
</evidence>
<evidence type="ECO:0000256" key="3">
    <source>
        <dbReference type="SAM" id="MobiDB-lite"/>
    </source>
</evidence>
<evidence type="ECO:0000305" key="4"/>